<reference key="1">
    <citation type="journal article" date="1995" name="J. Bacteriol.">
        <title>Genomic organization of the Klebsiella pneumoniae cps region responsible for serotype K2 capsular polysaccharide synthesis in the virulent strain Chedid.</title>
        <authorList>
            <person name="Arakawa Y."/>
            <person name="Wacharotayankun R."/>
            <person name="Nagatsuka T."/>
            <person name="Ito H."/>
            <person name="Kato N."/>
            <person name="Ohta M."/>
        </authorList>
    </citation>
    <scope>NUCLEOTIDE SEQUENCE [GENOMIC DNA]</scope>
    <source>
        <strain>Chedid</strain>
    </source>
</reference>
<feature type="chain" id="PRO_0000066159" description="Uncharacterized 42.6 kDa protein in cps region">
    <location>
        <begin position="1"/>
        <end position="373"/>
    </location>
</feature>
<name>YC08_KLEPN</name>
<accession>Q48454</accession>
<protein>
    <recommendedName>
        <fullName>Uncharacterized 42.6 kDa protein in cps region</fullName>
    </recommendedName>
    <alternativeName>
        <fullName>ORF8</fullName>
    </alternativeName>
</protein>
<proteinExistence type="predicted"/>
<dbReference type="EMBL" id="D21242">
    <property type="protein sequence ID" value="BAA04779.1"/>
    <property type="molecule type" value="Genomic_DNA"/>
</dbReference>
<dbReference type="RefSeq" id="WP_004180515.1">
    <property type="nucleotide sequence ID" value="NZ_WXZY01000015.1"/>
</dbReference>
<dbReference type="SMR" id="Q48454"/>
<dbReference type="CAZy" id="GT4">
    <property type="family name" value="Glycosyltransferase Family 4"/>
</dbReference>
<dbReference type="GO" id="GO:0016757">
    <property type="term" value="F:glycosyltransferase activity"/>
    <property type="evidence" value="ECO:0007669"/>
    <property type="project" value="InterPro"/>
</dbReference>
<dbReference type="CDD" id="cd03823">
    <property type="entry name" value="GT4_ExpE7-like"/>
    <property type="match status" value="1"/>
</dbReference>
<dbReference type="Gene3D" id="3.40.50.2000">
    <property type="entry name" value="Glycogen Phosphorylase B"/>
    <property type="match status" value="2"/>
</dbReference>
<dbReference type="InterPro" id="IPR001296">
    <property type="entry name" value="Glyco_trans_1"/>
</dbReference>
<dbReference type="InterPro" id="IPR028098">
    <property type="entry name" value="Glyco_trans_4-like_N"/>
</dbReference>
<dbReference type="InterPro" id="IPR050194">
    <property type="entry name" value="Glycosyltransferase_grp1"/>
</dbReference>
<dbReference type="PANTHER" id="PTHR45947">
    <property type="entry name" value="SULFOQUINOVOSYL TRANSFERASE SQD2"/>
    <property type="match status" value="1"/>
</dbReference>
<dbReference type="PANTHER" id="PTHR45947:SF3">
    <property type="entry name" value="SULFOQUINOVOSYL TRANSFERASE SQD2"/>
    <property type="match status" value="1"/>
</dbReference>
<dbReference type="Pfam" id="PF13439">
    <property type="entry name" value="Glyco_transf_4"/>
    <property type="match status" value="1"/>
</dbReference>
<dbReference type="Pfam" id="PF00534">
    <property type="entry name" value="Glycos_transf_1"/>
    <property type="match status" value="1"/>
</dbReference>
<dbReference type="SUPFAM" id="SSF53756">
    <property type="entry name" value="UDP-Glycosyltransferase/glycogen phosphorylase"/>
    <property type="match status" value="1"/>
</dbReference>
<organism>
    <name type="scientific">Klebsiella pneumoniae</name>
    <dbReference type="NCBI Taxonomy" id="573"/>
    <lineage>
        <taxon>Bacteria</taxon>
        <taxon>Pseudomonadati</taxon>
        <taxon>Pseudomonadota</taxon>
        <taxon>Gammaproteobacteria</taxon>
        <taxon>Enterobacterales</taxon>
        <taxon>Enterobacteriaceae</taxon>
        <taxon>Klebsiella/Raoultella group</taxon>
        <taxon>Klebsiella</taxon>
        <taxon>Klebsiella pneumoniae complex</taxon>
    </lineage>
</organism>
<sequence>MNIILVNTLYYPYKIGGAEVSVQILAESLIEKGHSVTVVSIHEHNERKDTEHNGVKIIYLPYSNIYWGLSLTKRNPLSKILWHLIDLYNFKIAKEFENIIMDVKPDIVHTNNLSGISCAVWQKAKKYKCRVIHTSRDYYLIHPNCKLYKNGSEMSVKSIAVSLWSLSKKILGKNVDVYVGISNYIKDKHIEAGFFKSTEKYTIYNSVKSNVILDLTAANDKRLGFIGRLTYEKGFDQFCKLAQLNKTKKFIAAGEFDKNSASLKQLALDSNVELLGYCPVDDFMQKVDIIVLPIKWQEPFGRVVVEAIFAGKVVLTNRVGGITELSRILPNIYFLEDIQDIDSIPFPVEIDDSEKKIFNVDYVTEQYLKIYKG</sequence>